<feature type="chain" id="PRO_1000145614" description="Agmatinase">
    <location>
        <begin position="1"/>
        <end position="306"/>
    </location>
</feature>
<feature type="binding site" evidence="1">
    <location>
        <position position="126"/>
    </location>
    <ligand>
        <name>Mn(2+)</name>
        <dbReference type="ChEBI" id="CHEBI:29035"/>
    </ligand>
</feature>
<feature type="binding site" evidence="1">
    <location>
        <position position="149"/>
    </location>
    <ligand>
        <name>Mn(2+)</name>
        <dbReference type="ChEBI" id="CHEBI:29035"/>
    </ligand>
</feature>
<feature type="binding site" evidence="1">
    <location>
        <position position="151"/>
    </location>
    <ligand>
        <name>Mn(2+)</name>
        <dbReference type="ChEBI" id="CHEBI:29035"/>
    </ligand>
</feature>
<feature type="binding site" evidence="1">
    <location>
        <position position="153"/>
    </location>
    <ligand>
        <name>Mn(2+)</name>
        <dbReference type="ChEBI" id="CHEBI:29035"/>
    </ligand>
</feature>
<feature type="binding site" evidence="1">
    <location>
        <position position="230"/>
    </location>
    <ligand>
        <name>Mn(2+)</name>
        <dbReference type="ChEBI" id="CHEBI:29035"/>
    </ligand>
</feature>
<feature type="binding site" evidence="1">
    <location>
        <position position="232"/>
    </location>
    <ligand>
        <name>Mn(2+)</name>
        <dbReference type="ChEBI" id="CHEBI:29035"/>
    </ligand>
</feature>
<sequence length="306" mass="33557">MSTLGHQYDNSLVSNAFGFLRLPMNFQPYDSDADWVITGVPFDMATSGRAGGRHGPAAIRQVSTNLAWEHNRFPWNFDMRERLNVVDCGDLVYAFGDAREMSEKLQAHAEKLLAAGKRMLSFGGDHFVTLPLLRAHAKHFGKMALVHFDAHTDTYANGCEFDHGTMFYTAPKEGLIDPNHSVQIGIRTEFDKDNGFTVLDACQVNDRSVDDVIAQVKQIVGDMPVYLTFDIDCLDPAFAPGTGTPVIGGLTSDRAIKLVRGLKDLNIVGMDVVEVAPAYDQSEITALAAATLALEMLYIQAAKKGE</sequence>
<accession>B1LDE6</accession>
<reference key="1">
    <citation type="journal article" date="2008" name="J. Bacteriol.">
        <title>Insights into the environmental resistance gene pool from the genome sequence of the multidrug-resistant environmental isolate Escherichia coli SMS-3-5.</title>
        <authorList>
            <person name="Fricke W.F."/>
            <person name="Wright M.S."/>
            <person name="Lindell A.H."/>
            <person name="Harkins D.M."/>
            <person name="Baker-Austin C."/>
            <person name="Ravel J."/>
            <person name="Stepanauskas R."/>
        </authorList>
    </citation>
    <scope>NUCLEOTIDE SEQUENCE [LARGE SCALE GENOMIC DNA]</scope>
    <source>
        <strain>SMS-3-5 / SECEC</strain>
    </source>
</reference>
<proteinExistence type="inferred from homology"/>
<dbReference type="EC" id="3.5.3.11" evidence="1"/>
<dbReference type="EMBL" id="CP000970">
    <property type="protein sequence ID" value="ACB18855.1"/>
    <property type="molecule type" value="Genomic_DNA"/>
</dbReference>
<dbReference type="RefSeq" id="WP_000105566.1">
    <property type="nucleotide sequence ID" value="NC_010498.1"/>
</dbReference>
<dbReference type="SMR" id="B1LDE6"/>
<dbReference type="GeneID" id="89517749"/>
<dbReference type="KEGG" id="ecm:EcSMS35_3079"/>
<dbReference type="HOGENOM" id="CLU_039478_0_0_6"/>
<dbReference type="UniPathway" id="UPA00534">
    <property type="reaction ID" value="UER00287"/>
</dbReference>
<dbReference type="Proteomes" id="UP000007011">
    <property type="component" value="Chromosome"/>
</dbReference>
<dbReference type="GO" id="GO:0008783">
    <property type="term" value="F:agmatinase activity"/>
    <property type="evidence" value="ECO:0007669"/>
    <property type="project" value="UniProtKB-UniRule"/>
</dbReference>
<dbReference type="GO" id="GO:0030145">
    <property type="term" value="F:manganese ion binding"/>
    <property type="evidence" value="ECO:0007669"/>
    <property type="project" value="InterPro"/>
</dbReference>
<dbReference type="GO" id="GO:0033389">
    <property type="term" value="P:putrescine biosynthetic process from arginine, via agmatine"/>
    <property type="evidence" value="ECO:0007669"/>
    <property type="project" value="TreeGrafter"/>
</dbReference>
<dbReference type="GO" id="GO:0008295">
    <property type="term" value="P:spermidine biosynthetic process"/>
    <property type="evidence" value="ECO:0007669"/>
    <property type="project" value="UniProtKB-UniRule"/>
</dbReference>
<dbReference type="CDD" id="cd11592">
    <property type="entry name" value="Agmatinase_PAH"/>
    <property type="match status" value="1"/>
</dbReference>
<dbReference type="FunFam" id="3.40.800.10:FF:000001">
    <property type="entry name" value="Agmatinase"/>
    <property type="match status" value="1"/>
</dbReference>
<dbReference type="Gene3D" id="3.40.800.10">
    <property type="entry name" value="Ureohydrolase domain"/>
    <property type="match status" value="1"/>
</dbReference>
<dbReference type="HAMAP" id="MF_01418">
    <property type="entry name" value="SpeB"/>
    <property type="match status" value="1"/>
</dbReference>
<dbReference type="InterPro" id="IPR023694">
    <property type="entry name" value="Agmatinase"/>
</dbReference>
<dbReference type="InterPro" id="IPR005925">
    <property type="entry name" value="Agmatinase-rel"/>
</dbReference>
<dbReference type="InterPro" id="IPR006035">
    <property type="entry name" value="Ureohydrolase"/>
</dbReference>
<dbReference type="InterPro" id="IPR023696">
    <property type="entry name" value="Ureohydrolase_dom_sf"/>
</dbReference>
<dbReference type="InterPro" id="IPR020855">
    <property type="entry name" value="Ureohydrolase_Mn_BS"/>
</dbReference>
<dbReference type="NCBIfam" id="TIGR01230">
    <property type="entry name" value="agmatinase"/>
    <property type="match status" value="1"/>
</dbReference>
<dbReference type="NCBIfam" id="NF002564">
    <property type="entry name" value="PRK02190.1"/>
    <property type="match status" value="1"/>
</dbReference>
<dbReference type="PANTHER" id="PTHR11358">
    <property type="entry name" value="ARGINASE/AGMATINASE"/>
    <property type="match status" value="1"/>
</dbReference>
<dbReference type="PANTHER" id="PTHR11358:SF26">
    <property type="entry name" value="GUANIDINO ACID HYDROLASE, MITOCHONDRIAL"/>
    <property type="match status" value="1"/>
</dbReference>
<dbReference type="Pfam" id="PF00491">
    <property type="entry name" value="Arginase"/>
    <property type="match status" value="1"/>
</dbReference>
<dbReference type="PIRSF" id="PIRSF036979">
    <property type="entry name" value="Arginase"/>
    <property type="match status" value="1"/>
</dbReference>
<dbReference type="SUPFAM" id="SSF52768">
    <property type="entry name" value="Arginase/deacetylase"/>
    <property type="match status" value="1"/>
</dbReference>
<dbReference type="PROSITE" id="PS01053">
    <property type="entry name" value="ARGINASE_1"/>
    <property type="match status" value="1"/>
</dbReference>
<dbReference type="PROSITE" id="PS51409">
    <property type="entry name" value="ARGINASE_2"/>
    <property type="match status" value="1"/>
</dbReference>
<keyword id="KW-0378">Hydrolase</keyword>
<keyword id="KW-0464">Manganese</keyword>
<keyword id="KW-0479">Metal-binding</keyword>
<keyword id="KW-0620">Polyamine biosynthesis</keyword>
<keyword id="KW-0661">Putrescine biosynthesis</keyword>
<keyword id="KW-0745">Spermidine biosynthesis</keyword>
<evidence type="ECO:0000255" key="1">
    <source>
        <dbReference type="HAMAP-Rule" id="MF_01418"/>
    </source>
</evidence>
<comment type="function">
    <text evidence="1">Catalyzes the formation of putrescine from agmatine.</text>
</comment>
<comment type="catalytic activity">
    <reaction evidence="1">
        <text>agmatine + H2O = urea + putrescine</text>
        <dbReference type="Rhea" id="RHEA:13929"/>
        <dbReference type="ChEBI" id="CHEBI:15377"/>
        <dbReference type="ChEBI" id="CHEBI:16199"/>
        <dbReference type="ChEBI" id="CHEBI:58145"/>
        <dbReference type="ChEBI" id="CHEBI:326268"/>
        <dbReference type="EC" id="3.5.3.11"/>
    </reaction>
</comment>
<comment type="cofactor">
    <cofactor evidence="1">
        <name>Mn(2+)</name>
        <dbReference type="ChEBI" id="CHEBI:29035"/>
    </cofactor>
</comment>
<comment type="pathway">
    <text evidence="1">Amine and polyamine biosynthesis; putrescine biosynthesis via agmatine pathway; putrescine from agmatine: step 1/1.</text>
</comment>
<comment type="similarity">
    <text evidence="1">Belongs to the arginase family. Agmatinase subfamily.</text>
</comment>
<organism>
    <name type="scientific">Escherichia coli (strain SMS-3-5 / SECEC)</name>
    <dbReference type="NCBI Taxonomy" id="439855"/>
    <lineage>
        <taxon>Bacteria</taxon>
        <taxon>Pseudomonadati</taxon>
        <taxon>Pseudomonadota</taxon>
        <taxon>Gammaproteobacteria</taxon>
        <taxon>Enterobacterales</taxon>
        <taxon>Enterobacteriaceae</taxon>
        <taxon>Escherichia</taxon>
    </lineage>
</organism>
<protein>
    <recommendedName>
        <fullName evidence="1">Agmatinase</fullName>
        <ecNumber evidence="1">3.5.3.11</ecNumber>
    </recommendedName>
    <alternativeName>
        <fullName evidence="1">Agmatine ureohydrolase</fullName>
        <shortName evidence="1">AUH</shortName>
    </alternativeName>
</protein>
<gene>
    <name evidence="1" type="primary">speB</name>
    <name type="ordered locus">EcSMS35_3079</name>
</gene>
<name>SPEB_ECOSM</name>